<protein>
    <recommendedName>
        <fullName evidence="1">Tyrosine--tRNA ligase</fullName>
        <ecNumber evidence="1">6.1.1.1</ecNumber>
    </recommendedName>
    <alternativeName>
        <fullName evidence="1">Tyrosyl-tRNA synthetase</fullName>
        <shortName evidence="1">TyrRS</shortName>
    </alternativeName>
</protein>
<dbReference type="EC" id="6.1.1.1" evidence="1"/>
<dbReference type="EMBL" id="CP000312">
    <property type="protein sequence ID" value="ABG85988.1"/>
    <property type="molecule type" value="Genomic_DNA"/>
</dbReference>
<dbReference type="RefSeq" id="WP_003452978.1">
    <property type="nucleotide sequence ID" value="NC_008262.1"/>
</dbReference>
<dbReference type="SMR" id="Q0SVA4"/>
<dbReference type="KEGG" id="cpr:CPR_0619"/>
<dbReference type="Proteomes" id="UP000001824">
    <property type="component" value="Chromosome"/>
</dbReference>
<dbReference type="GO" id="GO:0005829">
    <property type="term" value="C:cytosol"/>
    <property type="evidence" value="ECO:0007669"/>
    <property type="project" value="TreeGrafter"/>
</dbReference>
<dbReference type="GO" id="GO:0005524">
    <property type="term" value="F:ATP binding"/>
    <property type="evidence" value="ECO:0007669"/>
    <property type="project" value="UniProtKB-UniRule"/>
</dbReference>
<dbReference type="GO" id="GO:0003723">
    <property type="term" value="F:RNA binding"/>
    <property type="evidence" value="ECO:0007669"/>
    <property type="project" value="UniProtKB-KW"/>
</dbReference>
<dbReference type="GO" id="GO:0004831">
    <property type="term" value="F:tyrosine-tRNA ligase activity"/>
    <property type="evidence" value="ECO:0007669"/>
    <property type="project" value="UniProtKB-UniRule"/>
</dbReference>
<dbReference type="GO" id="GO:0006437">
    <property type="term" value="P:tyrosyl-tRNA aminoacylation"/>
    <property type="evidence" value="ECO:0007669"/>
    <property type="project" value="UniProtKB-UniRule"/>
</dbReference>
<dbReference type="CDD" id="cd00165">
    <property type="entry name" value="S4"/>
    <property type="match status" value="1"/>
</dbReference>
<dbReference type="CDD" id="cd00805">
    <property type="entry name" value="TyrRS_core"/>
    <property type="match status" value="1"/>
</dbReference>
<dbReference type="FunFam" id="1.10.240.10:FF:000001">
    <property type="entry name" value="Tyrosine--tRNA ligase"/>
    <property type="match status" value="1"/>
</dbReference>
<dbReference type="FunFam" id="3.40.50.620:FF:000008">
    <property type="entry name" value="Tyrosine--tRNA ligase"/>
    <property type="match status" value="1"/>
</dbReference>
<dbReference type="Gene3D" id="3.40.50.620">
    <property type="entry name" value="HUPs"/>
    <property type="match status" value="1"/>
</dbReference>
<dbReference type="Gene3D" id="3.10.290.10">
    <property type="entry name" value="RNA-binding S4 domain"/>
    <property type="match status" value="1"/>
</dbReference>
<dbReference type="Gene3D" id="1.10.240.10">
    <property type="entry name" value="Tyrosyl-Transfer RNA Synthetase"/>
    <property type="match status" value="1"/>
</dbReference>
<dbReference type="HAMAP" id="MF_02006">
    <property type="entry name" value="Tyr_tRNA_synth_type1"/>
    <property type="match status" value="1"/>
</dbReference>
<dbReference type="InterPro" id="IPR001412">
    <property type="entry name" value="aa-tRNA-synth_I_CS"/>
</dbReference>
<dbReference type="InterPro" id="IPR002305">
    <property type="entry name" value="aa-tRNA-synth_Ic"/>
</dbReference>
<dbReference type="InterPro" id="IPR014729">
    <property type="entry name" value="Rossmann-like_a/b/a_fold"/>
</dbReference>
<dbReference type="InterPro" id="IPR036986">
    <property type="entry name" value="S4_RNA-bd_sf"/>
</dbReference>
<dbReference type="InterPro" id="IPR054608">
    <property type="entry name" value="SYY-like_C"/>
</dbReference>
<dbReference type="InterPro" id="IPR002307">
    <property type="entry name" value="Tyr-tRNA-ligase"/>
</dbReference>
<dbReference type="InterPro" id="IPR024088">
    <property type="entry name" value="Tyr-tRNA-ligase_bac-type"/>
</dbReference>
<dbReference type="InterPro" id="IPR024107">
    <property type="entry name" value="Tyr-tRNA-ligase_bac_1"/>
</dbReference>
<dbReference type="NCBIfam" id="TIGR00234">
    <property type="entry name" value="tyrS"/>
    <property type="match status" value="1"/>
</dbReference>
<dbReference type="PANTHER" id="PTHR11766:SF0">
    <property type="entry name" value="TYROSINE--TRNA LIGASE, MITOCHONDRIAL"/>
    <property type="match status" value="1"/>
</dbReference>
<dbReference type="PANTHER" id="PTHR11766">
    <property type="entry name" value="TYROSYL-TRNA SYNTHETASE"/>
    <property type="match status" value="1"/>
</dbReference>
<dbReference type="Pfam" id="PF22421">
    <property type="entry name" value="SYY_C-terminal"/>
    <property type="match status" value="1"/>
</dbReference>
<dbReference type="Pfam" id="PF00579">
    <property type="entry name" value="tRNA-synt_1b"/>
    <property type="match status" value="1"/>
</dbReference>
<dbReference type="PRINTS" id="PR01040">
    <property type="entry name" value="TRNASYNTHTYR"/>
</dbReference>
<dbReference type="SUPFAM" id="SSF55174">
    <property type="entry name" value="Alpha-L RNA-binding motif"/>
    <property type="match status" value="1"/>
</dbReference>
<dbReference type="SUPFAM" id="SSF52374">
    <property type="entry name" value="Nucleotidylyl transferase"/>
    <property type="match status" value="1"/>
</dbReference>
<dbReference type="PROSITE" id="PS00178">
    <property type="entry name" value="AA_TRNA_LIGASE_I"/>
    <property type="match status" value="1"/>
</dbReference>
<dbReference type="PROSITE" id="PS50889">
    <property type="entry name" value="S4"/>
    <property type="match status" value="1"/>
</dbReference>
<comment type="function">
    <text evidence="1">Catalyzes the attachment of tyrosine to tRNA(Tyr) in a two-step reaction: tyrosine is first activated by ATP to form Tyr-AMP and then transferred to the acceptor end of tRNA(Tyr).</text>
</comment>
<comment type="catalytic activity">
    <reaction evidence="1">
        <text>tRNA(Tyr) + L-tyrosine + ATP = L-tyrosyl-tRNA(Tyr) + AMP + diphosphate + H(+)</text>
        <dbReference type="Rhea" id="RHEA:10220"/>
        <dbReference type="Rhea" id="RHEA-COMP:9706"/>
        <dbReference type="Rhea" id="RHEA-COMP:9707"/>
        <dbReference type="ChEBI" id="CHEBI:15378"/>
        <dbReference type="ChEBI" id="CHEBI:30616"/>
        <dbReference type="ChEBI" id="CHEBI:33019"/>
        <dbReference type="ChEBI" id="CHEBI:58315"/>
        <dbReference type="ChEBI" id="CHEBI:78442"/>
        <dbReference type="ChEBI" id="CHEBI:78536"/>
        <dbReference type="ChEBI" id="CHEBI:456215"/>
        <dbReference type="EC" id="6.1.1.1"/>
    </reaction>
</comment>
<comment type="subunit">
    <text evidence="1">Homodimer.</text>
</comment>
<comment type="subcellular location">
    <subcellularLocation>
        <location evidence="1">Cytoplasm</location>
    </subcellularLocation>
</comment>
<comment type="similarity">
    <text evidence="1">Belongs to the class-I aminoacyl-tRNA synthetase family. TyrS type 1 subfamily.</text>
</comment>
<accession>Q0SVA4</accession>
<sequence>MANVLDTLMERGYIKQFTHEAETRELLEKEKVTFYIGFDPTADSLHVGHFIAMMFMAHMQKAGHRPIALIGGGTATIGDPSGKTDMRKMMTNETIAHNVACIKKQMEKFIDFSDDKAILVNNADWLLNQNYVEFLREVGVHFSVNRMLSAECFKQRLERGLSFLEFNYMLMQGYDFYVLNKKYNCKMELGGDDQWSNMIAGVELVRKKSQKSAYAMTCTLLTNSEGQKMGKTVNGALWLDPEKTSPYEFYQYWRNVNDADVEKCLKLLTFIPMDEVRRLSSLEGSQINEAKKVLAFEVTKLVHGEEEATKAKQAAEALFGKGGDMSNVPTYEMGKDKLGSELLDILVEAEIVPSKAEGKRLVKQGGLSLNGEKVADFKKTLEEADFENGEVLIKRGKKNYNKIVLA</sequence>
<proteinExistence type="inferred from homology"/>
<evidence type="ECO:0000255" key="1">
    <source>
        <dbReference type="HAMAP-Rule" id="MF_02006"/>
    </source>
</evidence>
<organism>
    <name type="scientific">Clostridium perfringens (strain SM101 / Type A)</name>
    <dbReference type="NCBI Taxonomy" id="289380"/>
    <lineage>
        <taxon>Bacteria</taxon>
        <taxon>Bacillati</taxon>
        <taxon>Bacillota</taxon>
        <taxon>Clostridia</taxon>
        <taxon>Eubacteriales</taxon>
        <taxon>Clostridiaceae</taxon>
        <taxon>Clostridium</taxon>
    </lineage>
</organism>
<keyword id="KW-0030">Aminoacyl-tRNA synthetase</keyword>
<keyword id="KW-0067">ATP-binding</keyword>
<keyword id="KW-0963">Cytoplasm</keyword>
<keyword id="KW-0436">Ligase</keyword>
<keyword id="KW-0547">Nucleotide-binding</keyword>
<keyword id="KW-0648">Protein biosynthesis</keyword>
<keyword id="KW-0694">RNA-binding</keyword>
<name>SYY_CLOPS</name>
<gene>
    <name evidence="1" type="primary">tyrS</name>
    <name type="ordered locus">CPR_0619</name>
</gene>
<reference key="1">
    <citation type="journal article" date="2006" name="Genome Res.">
        <title>Skewed genomic variability in strains of the toxigenic bacterial pathogen, Clostridium perfringens.</title>
        <authorList>
            <person name="Myers G.S.A."/>
            <person name="Rasko D.A."/>
            <person name="Cheung J.K."/>
            <person name="Ravel J."/>
            <person name="Seshadri R."/>
            <person name="DeBoy R.T."/>
            <person name="Ren Q."/>
            <person name="Varga J."/>
            <person name="Awad M.M."/>
            <person name="Brinkac L.M."/>
            <person name="Daugherty S.C."/>
            <person name="Haft D.H."/>
            <person name="Dodson R.J."/>
            <person name="Madupu R."/>
            <person name="Nelson W.C."/>
            <person name="Rosovitz M.J."/>
            <person name="Sullivan S.A."/>
            <person name="Khouri H."/>
            <person name="Dimitrov G.I."/>
            <person name="Watkins K.L."/>
            <person name="Mulligan S."/>
            <person name="Benton J."/>
            <person name="Radune D."/>
            <person name="Fisher D.J."/>
            <person name="Atkins H.S."/>
            <person name="Hiscox T."/>
            <person name="Jost B.H."/>
            <person name="Billington S.J."/>
            <person name="Songer J.G."/>
            <person name="McClane B.A."/>
            <person name="Titball R.W."/>
            <person name="Rood J.I."/>
            <person name="Melville S.B."/>
            <person name="Paulsen I.T."/>
        </authorList>
    </citation>
    <scope>NUCLEOTIDE SEQUENCE [LARGE SCALE GENOMIC DNA]</scope>
    <source>
        <strain>SM101 / Type A</strain>
    </source>
</reference>
<feature type="chain" id="PRO_1000189283" description="Tyrosine--tRNA ligase">
    <location>
        <begin position="1"/>
        <end position="406"/>
    </location>
</feature>
<feature type="domain" description="S4 RNA-binding" evidence="1">
    <location>
        <begin position="340"/>
        <end position="404"/>
    </location>
</feature>
<feature type="short sequence motif" description="'HIGH' region">
    <location>
        <begin position="40"/>
        <end position="49"/>
    </location>
</feature>
<feature type="short sequence motif" description="'KMSKS' region">
    <location>
        <begin position="228"/>
        <end position="232"/>
    </location>
</feature>
<feature type="binding site" evidence="1">
    <location>
        <position position="35"/>
    </location>
    <ligand>
        <name>L-tyrosine</name>
        <dbReference type="ChEBI" id="CHEBI:58315"/>
    </ligand>
</feature>
<feature type="binding site" evidence="1">
    <location>
        <position position="168"/>
    </location>
    <ligand>
        <name>L-tyrosine</name>
        <dbReference type="ChEBI" id="CHEBI:58315"/>
    </ligand>
</feature>
<feature type="binding site" evidence="1">
    <location>
        <position position="172"/>
    </location>
    <ligand>
        <name>L-tyrosine</name>
        <dbReference type="ChEBI" id="CHEBI:58315"/>
    </ligand>
</feature>
<feature type="binding site" evidence="1">
    <location>
        <position position="231"/>
    </location>
    <ligand>
        <name>ATP</name>
        <dbReference type="ChEBI" id="CHEBI:30616"/>
    </ligand>
</feature>